<gene>
    <name type="primary">nuoE</name>
    <name type="ordered locus">SF2361</name>
    <name type="ordered locus">S2496</name>
</gene>
<organism>
    <name type="scientific">Shigella flexneri</name>
    <dbReference type="NCBI Taxonomy" id="623"/>
    <lineage>
        <taxon>Bacteria</taxon>
        <taxon>Pseudomonadati</taxon>
        <taxon>Pseudomonadota</taxon>
        <taxon>Gammaproteobacteria</taxon>
        <taxon>Enterobacterales</taxon>
        <taxon>Enterobacteriaceae</taxon>
        <taxon>Shigella</taxon>
    </lineage>
</organism>
<sequence length="166" mass="18590">MHENQQPQTEAFELSAAEREAIEHEMHHYEDPRAASIEALKIVQKQRGWVPDGAIHAIADVLGIPASDVEGVATFYSQIFRQPVGRHVIRYCDSVVCHINGYQGIQAALEKKLNIKPGQTTFDGRFTLLPTCCLGNCDKGPNMMIDEDTHAHLTPEAIPELLERYK</sequence>
<reference key="1">
    <citation type="journal article" date="2002" name="Nucleic Acids Res.">
        <title>Genome sequence of Shigella flexneri 2a: insights into pathogenicity through comparison with genomes of Escherichia coli K12 and O157.</title>
        <authorList>
            <person name="Jin Q."/>
            <person name="Yuan Z."/>
            <person name="Xu J."/>
            <person name="Wang Y."/>
            <person name="Shen Y."/>
            <person name="Lu W."/>
            <person name="Wang J."/>
            <person name="Liu H."/>
            <person name="Yang J."/>
            <person name="Yang F."/>
            <person name="Zhang X."/>
            <person name="Zhang J."/>
            <person name="Yang G."/>
            <person name="Wu H."/>
            <person name="Qu D."/>
            <person name="Dong J."/>
            <person name="Sun L."/>
            <person name="Xue Y."/>
            <person name="Zhao A."/>
            <person name="Gao Y."/>
            <person name="Zhu J."/>
            <person name="Kan B."/>
            <person name="Ding K."/>
            <person name="Chen S."/>
            <person name="Cheng H."/>
            <person name="Yao Z."/>
            <person name="He B."/>
            <person name="Chen R."/>
            <person name="Ma D."/>
            <person name="Qiang B."/>
            <person name="Wen Y."/>
            <person name="Hou Y."/>
            <person name="Yu J."/>
        </authorList>
    </citation>
    <scope>NUCLEOTIDE SEQUENCE [LARGE SCALE GENOMIC DNA]</scope>
    <source>
        <strain>301 / Serotype 2a</strain>
    </source>
</reference>
<reference key="2">
    <citation type="journal article" date="2003" name="Infect. Immun.">
        <title>Complete genome sequence and comparative genomics of Shigella flexneri serotype 2a strain 2457T.</title>
        <authorList>
            <person name="Wei J."/>
            <person name="Goldberg M.B."/>
            <person name="Burland V."/>
            <person name="Venkatesan M.M."/>
            <person name="Deng W."/>
            <person name="Fournier G."/>
            <person name="Mayhew G.F."/>
            <person name="Plunkett G. III"/>
            <person name="Rose D.J."/>
            <person name="Darling A."/>
            <person name="Mau B."/>
            <person name="Perna N.T."/>
            <person name="Payne S.M."/>
            <person name="Runyen-Janecky L.J."/>
            <person name="Zhou S."/>
            <person name="Schwartz D.C."/>
            <person name="Blattner F.R."/>
        </authorList>
    </citation>
    <scope>NUCLEOTIDE SEQUENCE [LARGE SCALE GENOMIC DNA]</scope>
    <source>
        <strain>ATCC 700930 / 2457T / Serotype 2a</strain>
    </source>
</reference>
<accession>P0AFD3</accession>
<accession>P33601</accession>
<dbReference type="EC" id="7.1.1.-"/>
<dbReference type="EMBL" id="AE005674">
    <property type="protein sequence ID" value="AAN43874.1"/>
    <property type="molecule type" value="Genomic_DNA"/>
</dbReference>
<dbReference type="EMBL" id="AE014073">
    <property type="protein sequence ID" value="AAP17692.1"/>
    <property type="molecule type" value="Genomic_DNA"/>
</dbReference>
<dbReference type="RefSeq" id="NP_708167.1">
    <property type="nucleotide sequence ID" value="NC_004337.2"/>
</dbReference>
<dbReference type="RefSeq" id="WP_000545042.1">
    <property type="nucleotide sequence ID" value="NZ_WPGW01000084.1"/>
</dbReference>
<dbReference type="SMR" id="P0AFD3"/>
<dbReference type="STRING" id="198214.SF2361"/>
<dbReference type="PaxDb" id="198214-SF2361"/>
<dbReference type="GeneID" id="1027235"/>
<dbReference type="GeneID" id="93774889"/>
<dbReference type="KEGG" id="sfl:SF2361"/>
<dbReference type="KEGG" id="sfx:S2496"/>
<dbReference type="PATRIC" id="fig|198214.7.peg.2827"/>
<dbReference type="HOGENOM" id="CLU_054362_2_0_6"/>
<dbReference type="Proteomes" id="UP000001006">
    <property type="component" value="Chromosome"/>
</dbReference>
<dbReference type="Proteomes" id="UP000002673">
    <property type="component" value="Chromosome"/>
</dbReference>
<dbReference type="GO" id="GO:0051537">
    <property type="term" value="F:2 iron, 2 sulfur cluster binding"/>
    <property type="evidence" value="ECO:0007669"/>
    <property type="project" value="UniProtKB-KW"/>
</dbReference>
<dbReference type="GO" id="GO:0046872">
    <property type="term" value="F:metal ion binding"/>
    <property type="evidence" value="ECO:0007669"/>
    <property type="project" value="UniProtKB-KW"/>
</dbReference>
<dbReference type="GO" id="GO:0003954">
    <property type="term" value="F:NADH dehydrogenase activity"/>
    <property type="evidence" value="ECO:0007669"/>
    <property type="project" value="TreeGrafter"/>
</dbReference>
<dbReference type="GO" id="GO:0048038">
    <property type="term" value="F:quinone binding"/>
    <property type="evidence" value="ECO:0007669"/>
    <property type="project" value="UniProtKB-KW"/>
</dbReference>
<dbReference type="CDD" id="cd03064">
    <property type="entry name" value="TRX_Fd_NuoE"/>
    <property type="match status" value="1"/>
</dbReference>
<dbReference type="FunFam" id="1.10.10.1590:FF:000001">
    <property type="entry name" value="NADH-quinone oxidoreductase subunit E"/>
    <property type="match status" value="1"/>
</dbReference>
<dbReference type="FunFam" id="3.40.30.10:FF:000015">
    <property type="entry name" value="NADH-quinone oxidoreductase subunit E"/>
    <property type="match status" value="1"/>
</dbReference>
<dbReference type="Gene3D" id="3.40.30.10">
    <property type="entry name" value="Glutaredoxin"/>
    <property type="match status" value="1"/>
</dbReference>
<dbReference type="Gene3D" id="1.10.10.1590">
    <property type="entry name" value="NADH-quinone oxidoreductase subunit E"/>
    <property type="match status" value="1"/>
</dbReference>
<dbReference type="InterPro" id="IPR002023">
    <property type="entry name" value="NuoE-like"/>
</dbReference>
<dbReference type="InterPro" id="IPR042128">
    <property type="entry name" value="NuoE_dom"/>
</dbReference>
<dbReference type="InterPro" id="IPR041921">
    <property type="entry name" value="NuoE_N"/>
</dbReference>
<dbReference type="InterPro" id="IPR036249">
    <property type="entry name" value="Thioredoxin-like_sf"/>
</dbReference>
<dbReference type="NCBIfam" id="TIGR01958">
    <property type="entry name" value="nuoE_fam"/>
    <property type="match status" value="1"/>
</dbReference>
<dbReference type="NCBIfam" id="NF005722">
    <property type="entry name" value="PRK07539.1-2"/>
    <property type="match status" value="1"/>
</dbReference>
<dbReference type="PANTHER" id="PTHR10371:SF3">
    <property type="entry name" value="NADH DEHYDROGENASE [UBIQUINONE] FLAVOPROTEIN 2, MITOCHONDRIAL"/>
    <property type="match status" value="1"/>
</dbReference>
<dbReference type="PANTHER" id="PTHR10371">
    <property type="entry name" value="NADH DEHYDROGENASE UBIQUINONE FLAVOPROTEIN 2, MITOCHONDRIAL"/>
    <property type="match status" value="1"/>
</dbReference>
<dbReference type="Pfam" id="PF01257">
    <property type="entry name" value="2Fe-2S_thioredx"/>
    <property type="match status" value="1"/>
</dbReference>
<dbReference type="PIRSF" id="PIRSF000216">
    <property type="entry name" value="NADH_DH_24kDa"/>
    <property type="match status" value="1"/>
</dbReference>
<dbReference type="SUPFAM" id="SSF52833">
    <property type="entry name" value="Thioredoxin-like"/>
    <property type="match status" value="1"/>
</dbReference>
<dbReference type="PROSITE" id="PS01099">
    <property type="entry name" value="COMPLEX1_24K"/>
    <property type="match status" value="1"/>
</dbReference>
<comment type="function">
    <text evidence="1">NDH-1 shuttles electrons from NADH, via FMN and iron-sulfur (Fe-S) centers, to quinones in the respiratory chain. The immediate electron acceptor for the enzyme in this species is believed to be ubiquinone. Couples the redox reaction to proton translocation (for every two electrons transferred, four hydrogen ions are translocated across the cytoplasmic membrane), and thus conserves the redox energy in a proton gradient (By similarity).</text>
</comment>
<comment type="catalytic activity">
    <reaction>
        <text>a quinone + NADH + 5 H(+)(in) = a quinol + NAD(+) + 4 H(+)(out)</text>
        <dbReference type="Rhea" id="RHEA:57888"/>
        <dbReference type="ChEBI" id="CHEBI:15378"/>
        <dbReference type="ChEBI" id="CHEBI:24646"/>
        <dbReference type="ChEBI" id="CHEBI:57540"/>
        <dbReference type="ChEBI" id="CHEBI:57945"/>
        <dbReference type="ChEBI" id="CHEBI:132124"/>
    </reaction>
</comment>
<comment type="cofactor">
    <cofactor evidence="3">
        <name>[2Fe-2S] cluster</name>
        <dbReference type="ChEBI" id="CHEBI:190135"/>
    </cofactor>
    <text evidence="3">Binds 1 [2Fe-2S] cluster.</text>
</comment>
<comment type="subunit">
    <text evidence="1">Composed of 13 different subunits. Subunits NuoCD, E, F, and G constitute the peripheral sector of the complex (By similarity).</text>
</comment>
<comment type="similarity">
    <text evidence="3">Belongs to the complex I 24 kDa subunit family.</text>
</comment>
<name>NUOE_SHIFL</name>
<protein>
    <recommendedName>
        <fullName>NADH-quinone oxidoreductase subunit E</fullName>
        <ecNumber>7.1.1.-</ecNumber>
    </recommendedName>
    <alternativeName>
        <fullName>NADH dehydrogenase I subunit E</fullName>
    </alternativeName>
    <alternativeName>
        <fullName>NDH-1 subunit E</fullName>
    </alternativeName>
</protein>
<proteinExistence type="inferred from homology"/>
<keyword id="KW-0001">2Fe-2S</keyword>
<keyword id="KW-0408">Iron</keyword>
<keyword id="KW-0411">Iron-sulfur</keyword>
<keyword id="KW-0479">Metal-binding</keyword>
<keyword id="KW-0520">NAD</keyword>
<keyword id="KW-0874">Quinone</keyword>
<keyword id="KW-1185">Reference proteome</keyword>
<keyword id="KW-1278">Translocase</keyword>
<keyword id="KW-0830">Ubiquinone</keyword>
<feature type="chain" id="PRO_0000118695" description="NADH-quinone oxidoreductase subunit E">
    <location>
        <begin position="1"/>
        <end position="166"/>
    </location>
</feature>
<feature type="binding site" evidence="2">
    <location>
        <position position="92"/>
    </location>
    <ligand>
        <name>[2Fe-2S] cluster</name>
        <dbReference type="ChEBI" id="CHEBI:190135"/>
    </ligand>
</feature>
<feature type="binding site" evidence="2">
    <location>
        <position position="97"/>
    </location>
    <ligand>
        <name>[2Fe-2S] cluster</name>
        <dbReference type="ChEBI" id="CHEBI:190135"/>
    </ligand>
</feature>
<feature type="binding site" evidence="2">
    <location>
        <position position="133"/>
    </location>
    <ligand>
        <name>[2Fe-2S] cluster</name>
        <dbReference type="ChEBI" id="CHEBI:190135"/>
    </ligand>
</feature>
<feature type="binding site" evidence="2">
    <location>
        <position position="137"/>
    </location>
    <ligand>
        <name>[2Fe-2S] cluster</name>
        <dbReference type="ChEBI" id="CHEBI:190135"/>
    </ligand>
</feature>
<evidence type="ECO:0000250" key="1"/>
<evidence type="ECO:0000255" key="2"/>
<evidence type="ECO:0000305" key="3"/>